<organism>
    <name type="scientific">Escherichia coli O127:H6 (strain E2348/69 / EPEC)</name>
    <dbReference type="NCBI Taxonomy" id="574521"/>
    <lineage>
        <taxon>Bacteria</taxon>
        <taxon>Pseudomonadati</taxon>
        <taxon>Pseudomonadota</taxon>
        <taxon>Gammaproteobacteria</taxon>
        <taxon>Enterobacterales</taxon>
        <taxon>Enterobacteriaceae</taxon>
        <taxon>Escherichia</taxon>
    </lineage>
</organism>
<keyword id="KW-0963">Cytoplasm</keyword>
<keyword id="KW-0448">Lipopolysaccharide biosynthesis</keyword>
<keyword id="KW-0548">Nucleotidyltransferase</keyword>
<keyword id="KW-1185">Reference proteome</keyword>
<keyword id="KW-0808">Transferase</keyword>
<gene>
    <name evidence="1" type="primary">kdsB</name>
    <name type="ordered locus">E2348C_0911</name>
</gene>
<sequence length="248" mass="27686">MSFVVIIPARYASTRLPGKPLVDINGKPMIVHVLERARESGAERIIVATDHEDVARAVEAAGGEVCMTRADHQSGTERLAEVVEKCAFSDDTVIVNVQGDEPMIPATIIRQVADNLAQRQVGMATLAVPIHNAEEAFNPNAVKVVLDAEGYALYFSRATIPWDRDRFVKDLETVGDNFLRHLGIYGYRAGFIRRYVTWQPSPLEHIEMLEQLRVLWYGEKIHVAVAQEVPGTGVDTPEDLKRVRAEMR</sequence>
<feature type="chain" id="PRO_1000117799" description="3-deoxy-manno-octulosonate cytidylyltransferase">
    <location>
        <begin position="1"/>
        <end position="248"/>
    </location>
</feature>
<comment type="function">
    <text evidence="1">Activates KDO (a required 8-carbon sugar) for incorporation into bacterial lipopolysaccharide in Gram-negative bacteria.</text>
</comment>
<comment type="catalytic activity">
    <reaction evidence="1">
        <text>3-deoxy-alpha-D-manno-oct-2-ulosonate + CTP = CMP-3-deoxy-beta-D-manno-octulosonate + diphosphate</text>
        <dbReference type="Rhea" id="RHEA:23448"/>
        <dbReference type="ChEBI" id="CHEBI:33019"/>
        <dbReference type="ChEBI" id="CHEBI:37563"/>
        <dbReference type="ChEBI" id="CHEBI:85986"/>
        <dbReference type="ChEBI" id="CHEBI:85987"/>
        <dbReference type="EC" id="2.7.7.38"/>
    </reaction>
</comment>
<comment type="pathway">
    <text evidence="1">Nucleotide-sugar biosynthesis; CMP-3-deoxy-D-manno-octulosonate biosynthesis; CMP-3-deoxy-D-manno-octulosonate from 3-deoxy-D-manno-octulosonate and CTP: step 1/1.</text>
</comment>
<comment type="pathway">
    <text evidence="1">Bacterial outer membrane biogenesis; lipopolysaccharide biosynthesis.</text>
</comment>
<comment type="subcellular location">
    <subcellularLocation>
        <location evidence="1">Cytoplasm</location>
    </subcellularLocation>
</comment>
<comment type="similarity">
    <text evidence="1">Belongs to the KdsB family.</text>
</comment>
<protein>
    <recommendedName>
        <fullName evidence="1">3-deoxy-manno-octulosonate cytidylyltransferase</fullName>
        <ecNumber evidence="1">2.7.7.38</ecNumber>
    </recommendedName>
    <alternativeName>
        <fullName evidence="1">CMP-2-keto-3-deoxyoctulosonic acid synthase</fullName>
        <shortName evidence="1">CKS</shortName>
        <shortName evidence="1">CMP-KDO synthase</shortName>
    </alternativeName>
</protein>
<dbReference type="EC" id="2.7.7.38" evidence="1"/>
<dbReference type="EMBL" id="FM180568">
    <property type="protein sequence ID" value="CAS08459.1"/>
    <property type="molecule type" value="Genomic_DNA"/>
</dbReference>
<dbReference type="RefSeq" id="WP_000011614.1">
    <property type="nucleotide sequence ID" value="NC_011601.1"/>
</dbReference>
<dbReference type="SMR" id="B7UN04"/>
<dbReference type="KEGG" id="ecg:E2348C_0911"/>
<dbReference type="HOGENOM" id="CLU_065038_1_0_6"/>
<dbReference type="UniPathway" id="UPA00030"/>
<dbReference type="UniPathway" id="UPA00358">
    <property type="reaction ID" value="UER00476"/>
</dbReference>
<dbReference type="Proteomes" id="UP000008205">
    <property type="component" value="Chromosome"/>
</dbReference>
<dbReference type="GO" id="GO:0005829">
    <property type="term" value="C:cytosol"/>
    <property type="evidence" value="ECO:0007669"/>
    <property type="project" value="TreeGrafter"/>
</dbReference>
<dbReference type="GO" id="GO:0008690">
    <property type="term" value="F:3-deoxy-manno-octulosonate cytidylyltransferase activity"/>
    <property type="evidence" value="ECO:0007669"/>
    <property type="project" value="UniProtKB-UniRule"/>
</dbReference>
<dbReference type="GO" id="GO:0033468">
    <property type="term" value="P:CMP-keto-3-deoxy-D-manno-octulosonic acid biosynthetic process"/>
    <property type="evidence" value="ECO:0007669"/>
    <property type="project" value="UniProtKB-UniRule"/>
</dbReference>
<dbReference type="GO" id="GO:0009103">
    <property type="term" value="P:lipopolysaccharide biosynthetic process"/>
    <property type="evidence" value="ECO:0007669"/>
    <property type="project" value="UniProtKB-UniRule"/>
</dbReference>
<dbReference type="CDD" id="cd02517">
    <property type="entry name" value="CMP-KDO-Synthetase"/>
    <property type="match status" value="1"/>
</dbReference>
<dbReference type="FunFam" id="3.90.550.10:FF:000011">
    <property type="entry name" value="3-deoxy-manno-octulosonate cytidylyltransferase"/>
    <property type="match status" value="1"/>
</dbReference>
<dbReference type="Gene3D" id="3.90.550.10">
    <property type="entry name" value="Spore Coat Polysaccharide Biosynthesis Protein SpsA, Chain A"/>
    <property type="match status" value="1"/>
</dbReference>
<dbReference type="HAMAP" id="MF_00057">
    <property type="entry name" value="KdsB"/>
    <property type="match status" value="1"/>
</dbReference>
<dbReference type="InterPro" id="IPR003329">
    <property type="entry name" value="Cytidylyl_trans"/>
</dbReference>
<dbReference type="InterPro" id="IPR004528">
    <property type="entry name" value="KdsB"/>
</dbReference>
<dbReference type="InterPro" id="IPR029044">
    <property type="entry name" value="Nucleotide-diphossugar_trans"/>
</dbReference>
<dbReference type="NCBIfam" id="TIGR00466">
    <property type="entry name" value="kdsB"/>
    <property type="match status" value="1"/>
</dbReference>
<dbReference type="NCBIfam" id="NF003950">
    <property type="entry name" value="PRK05450.1-3"/>
    <property type="match status" value="1"/>
</dbReference>
<dbReference type="NCBIfam" id="NF003952">
    <property type="entry name" value="PRK05450.1-5"/>
    <property type="match status" value="1"/>
</dbReference>
<dbReference type="NCBIfam" id="NF009905">
    <property type="entry name" value="PRK13368.1"/>
    <property type="match status" value="1"/>
</dbReference>
<dbReference type="PANTHER" id="PTHR42866">
    <property type="entry name" value="3-DEOXY-MANNO-OCTULOSONATE CYTIDYLYLTRANSFERASE"/>
    <property type="match status" value="1"/>
</dbReference>
<dbReference type="PANTHER" id="PTHR42866:SF2">
    <property type="entry name" value="3-DEOXY-MANNO-OCTULOSONATE CYTIDYLYLTRANSFERASE, MITOCHONDRIAL"/>
    <property type="match status" value="1"/>
</dbReference>
<dbReference type="Pfam" id="PF02348">
    <property type="entry name" value="CTP_transf_3"/>
    <property type="match status" value="1"/>
</dbReference>
<dbReference type="SUPFAM" id="SSF53448">
    <property type="entry name" value="Nucleotide-diphospho-sugar transferases"/>
    <property type="match status" value="1"/>
</dbReference>
<accession>B7UN04</accession>
<proteinExistence type="inferred from homology"/>
<reference key="1">
    <citation type="journal article" date="2009" name="J. Bacteriol.">
        <title>Complete genome sequence and comparative genome analysis of enteropathogenic Escherichia coli O127:H6 strain E2348/69.</title>
        <authorList>
            <person name="Iguchi A."/>
            <person name="Thomson N.R."/>
            <person name="Ogura Y."/>
            <person name="Saunders D."/>
            <person name="Ooka T."/>
            <person name="Henderson I.R."/>
            <person name="Harris D."/>
            <person name="Asadulghani M."/>
            <person name="Kurokawa K."/>
            <person name="Dean P."/>
            <person name="Kenny B."/>
            <person name="Quail M.A."/>
            <person name="Thurston S."/>
            <person name="Dougan G."/>
            <person name="Hayashi T."/>
            <person name="Parkhill J."/>
            <person name="Frankel G."/>
        </authorList>
    </citation>
    <scope>NUCLEOTIDE SEQUENCE [LARGE SCALE GENOMIC DNA]</scope>
    <source>
        <strain>E2348/69 / EPEC</strain>
    </source>
</reference>
<evidence type="ECO:0000255" key="1">
    <source>
        <dbReference type="HAMAP-Rule" id="MF_00057"/>
    </source>
</evidence>
<name>KDSB_ECO27</name>